<keyword id="KW-0255">Endonuclease</keyword>
<keyword id="KW-0378">Hydrolase</keyword>
<keyword id="KW-0540">Nuclease</keyword>
<keyword id="KW-0694">RNA-binding</keyword>
<keyword id="KW-0819">tRNA processing</keyword>
<dbReference type="EC" id="3.1.26.5" evidence="1"/>
<dbReference type="EMBL" id="CP001050">
    <property type="protein sequence ID" value="ACF31261.1"/>
    <property type="molecule type" value="Genomic_DNA"/>
</dbReference>
<dbReference type="RefSeq" id="WP_003687193.1">
    <property type="nucleotide sequence ID" value="NC_011035.1"/>
</dbReference>
<dbReference type="SMR" id="B4RJJ5"/>
<dbReference type="GeneID" id="66754508"/>
<dbReference type="KEGG" id="ngk:NGK_2662"/>
<dbReference type="HOGENOM" id="CLU_117179_11_2_4"/>
<dbReference type="Proteomes" id="UP000002564">
    <property type="component" value="Chromosome"/>
</dbReference>
<dbReference type="GO" id="GO:0030677">
    <property type="term" value="C:ribonuclease P complex"/>
    <property type="evidence" value="ECO:0007669"/>
    <property type="project" value="TreeGrafter"/>
</dbReference>
<dbReference type="GO" id="GO:0042781">
    <property type="term" value="F:3'-tRNA processing endoribonuclease activity"/>
    <property type="evidence" value="ECO:0007669"/>
    <property type="project" value="TreeGrafter"/>
</dbReference>
<dbReference type="GO" id="GO:0004526">
    <property type="term" value="F:ribonuclease P activity"/>
    <property type="evidence" value="ECO:0007669"/>
    <property type="project" value="UniProtKB-UniRule"/>
</dbReference>
<dbReference type="GO" id="GO:0000049">
    <property type="term" value="F:tRNA binding"/>
    <property type="evidence" value="ECO:0007669"/>
    <property type="project" value="UniProtKB-UniRule"/>
</dbReference>
<dbReference type="GO" id="GO:0001682">
    <property type="term" value="P:tRNA 5'-leader removal"/>
    <property type="evidence" value="ECO:0007669"/>
    <property type="project" value="UniProtKB-UniRule"/>
</dbReference>
<dbReference type="FunFam" id="3.30.230.10:FF:000083">
    <property type="entry name" value="Ribonuclease P protein component"/>
    <property type="match status" value="1"/>
</dbReference>
<dbReference type="Gene3D" id="3.30.230.10">
    <property type="match status" value="1"/>
</dbReference>
<dbReference type="HAMAP" id="MF_00227">
    <property type="entry name" value="RNase_P"/>
    <property type="match status" value="1"/>
</dbReference>
<dbReference type="InterPro" id="IPR020568">
    <property type="entry name" value="Ribosomal_Su5_D2-typ_SF"/>
</dbReference>
<dbReference type="InterPro" id="IPR014721">
    <property type="entry name" value="Ribsml_uS5_D2-typ_fold_subgr"/>
</dbReference>
<dbReference type="InterPro" id="IPR000100">
    <property type="entry name" value="RNase_P"/>
</dbReference>
<dbReference type="InterPro" id="IPR020539">
    <property type="entry name" value="RNase_P_CS"/>
</dbReference>
<dbReference type="NCBIfam" id="TIGR00188">
    <property type="entry name" value="rnpA"/>
    <property type="match status" value="1"/>
</dbReference>
<dbReference type="PANTHER" id="PTHR33992">
    <property type="entry name" value="RIBONUCLEASE P PROTEIN COMPONENT"/>
    <property type="match status" value="1"/>
</dbReference>
<dbReference type="PANTHER" id="PTHR33992:SF1">
    <property type="entry name" value="RIBONUCLEASE P PROTEIN COMPONENT"/>
    <property type="match status" value="1"/>
</dbReference>
<dbReference type="Pfam" id="PF00825">
    <property type="entry name" value="Ribonuclease_P"/>
    <property type="match status" value="1"/>
</dbReference>
<dbReference type="SUPFAM" id="SSF54211">
    <property type="entry name" value="Ribosomal protein S5 domain 2-like"/>
    <property type="match status" value="1"/>
</dbReference>
<dbReference type="PROSITE" id="PS00648">
    <property type="entry name" value="RIBONUCLEASE_P"/>
    <property type="match status" value="1"/>
</dbReference>
<gene>
    <name evidence="1" type="primary">rnpA</name>
    <name type="ordered locus">NGK_2662</name>
</gene>
<protein>
    <recommendedName>
        <fullName evidence="1">Ribonuclease P protein component</fullName>
        <shortName evidence="1">RNase P protein</shortName>
        <shortName evidence="1">RNaseP protein</shortName>
        <ecNumber evidence="1">3.1.26.5</ecNumber>
    </recommendedName>
    <alternativeName>
        <fullName evidence="1">Protein C5</fullName>
    </alternativeName>
</protein>
<reference key="1">
    <citation type="journal article" date="2008" name="J. Bacteriol.">
        <title>Complete genome sequence of Neisseria gonorrhoeae NCCP11945.</title>
        <authorList>
            <person name="Chung G.T."/>
            <person name="Yoo J.S."/>
            <person name="Oh H.B."/>
            <person name="Lee Y.S."/>
            <person name="Cha S.H."/>
            <person name="Kim S.J."/>
            <person name="Yoo C.K."/>
        </authorList>
    </citation>
    <scope>NUCLEOTIDE SEQUENCE [LARGE SCALE GENOMIC DNA]</scope>
    <source>
        <strain>NCCP11945</strain>
    </source>
</reference>
<organism>
    <name type="scientific">Neisseria gonorrhoeae (strain NCCP11945)</name>
    <dbReference type="NCBI Taxonomy" id="521006"/>
    <lineage>
        <taxon>Bacteria</taxon>
        <taxon>Pseudomonadati</taxon>
        <taxon>Pseudomonadota</taxon>
        <taxon>Betaproteobacteria</taxon>
        <taxon>Neisseriales</taxon>
        <taxon>Neisseriaceae</taxon>
        <taxon>Neisseria</taxon>
    </lineage>
</organism>
<name>RNPA_NEIG2</name>
<comment type="function">
    <text evidence="1">RNaseP catalyzes the removal of the 5'-leader sequence from pre-tRNA to produce the mature 5'-terminus. It can also cleave other RNA substrates such as 4.5S RNA. The protein component plays an auxiliary but essential role in vivo by binding to the 5'-leader sequence and broadening the substrate specificity of the ribozyme.</text>
</comment>
<comment type="catalytic activity">
    <reaction evidence="1">
        <text>Endonucleolytic cleavage of RNA, removing 5'-extranucleotides from tRNA precursor.</text>
        <dbReference type="EC" id="3.1.26.5"/>
    </reaction>
</comment>
<comment type="subunit">
    <text evidence="1">Consists of a catalytic RNA component (M1 or rnpB) and a protein subunit.</text>
</comment>
<comment type="similarity">
    <text evidence="1">Belongs to the RnpA family.</text>
</comment>
<proteinExistence type="inferred from homology"/>
<feature type="chain" id="PRO_1000100376" description="Ribonuclease P protein component">
    <location>
        <begin position="1"/>
        <end position="121"/>
    </location>
</feature>
<evidence type="ECO:0000255" key="1">
    <source>
        <dbReference type="HAMAP-Rule" id="MF_00227"/>
    </source>
</evidence>
<sequence length="121" mass="14217">MDYRFGRQYRLLKTDDFSSVFAFRNRRSRDLLQVSRSNGNGLDHPRIGLVVGKKTAKRANERNYMKRVIRDWFRLNKNRLPPQDFVVRVRRKFDRATAKQARAELAQLMFGNPATGCGKQV</sequence>
<accession>B4RJJ5</accession>